<feature type="chain" id="PRO_1000016263" description="ATP phosphoribosyltransferase regulatory subunit">
    <location>
        <begin position="1"/>
        <end position="383"/>
    </location>
</feature>
<reference key="1">
    <citation type="journal article" date="2007" name="PLoS Genet.">
        <title>Genome analysis of Minibacterium massiliensis highlights the convergent evolution of water-living bacteria.</title>
        <authorList>
            <person name="Audic S."/>
            <person name="Robert C."/>
            <person name="Campagna B."/>
            <person name="Parinello H."/>
            <person name="Claverie J.-M."/>
            <person name="Raoult D."/>
            <person name="Drancourt M."/>
        </authorList>
    </citation>
    <scope>NUCLEOTIDE SEQUENCE [LARGE SCALE GENOMIC DNA]</scope>
    <source>
        <strain>Marseille</strain>
    </source>
</reference>
<name>HISZ_JANMA</name>
<comment type="function">
    <text evidence="1">Required for the first step of histidine biosynthesis. May allow the feedback regulation of ATP phosphoribosyltransferase activity by histidine.</text>
</comment>
<comment type="pathway">
    <text evidence="1">Amino-acid biosynthesis; L-histidine biosynthesis; L-histidine from 5-phospho-alpha-D-ribose 1-diphosphate: step 1/9.</text>
</comment>
<comment type="subunit">
    <text evidence="1">Heteromultimer composed of HisG and HisZ subunits.</text>
</comment>
<comment type="subcellular location">
    <subcellularLocation>
        <location evidence="1">Cytoplasm</location>
    </subcellularLocation>
</comment>
<comment type="miscellaneous">
    <text>This function is generally fulfilled by the C-terminal part of HisG, which is missing in some bacteria such as this one.</text>
</comment>
<comment type="similarity">
    <text evidence="1">Belongs to the class-II aminoacyl-tRNA synthetase family. HisZ subfamily.</text>
</comment>
<accession>A6SZW1</accession>
<keyword id="KW-0028">Amino-acid biosynthesis</keyword>
<keyword id="KW-0963">Cytoplasm</keyword>
<keyword id="KW-0368">Histidine biosynthesis</keyword>
<evidence type="ECO:0000255" key="1">
    <source>
        <dbReference type="HAMAP-Rule" id="MF_00125"/>
    </source>
</evidence>
<proteinExistence type="inferred from homology"/>
<dbReference type="EMBL" id="CP000269">
    <property type="protein sequence ID" value="ABR88601.1"/>
    <property type="molecule type" value="Genomic_DNA"/>
</dbReference>
<dbReference type="RefSeq" id="WP_012079971.1">
    <property type="nucleotide sequence ID" value="NC_009659.1"/>
</dbReference>
<dbReference type="SMR" id="A6SZW1"/>
<dbReference type="STRING" id="375286.mma_2118"/>
<dbReference type="KEGG" id="mms:mma_2118"/>
<dbReference type="eggNOG" id="COG3705">
    <property type="taxonomic scope" value="Bacteria"/>
</dbReference>
<dbReference type="HOGENOM" id="CLU_025113_0_1_4"/>
<dbReference type="OrthoDB" id="9769617at2"/>
<dbReference type="UniPathway" id="UPA00031">
    <property type="reaction ID" value="UER00006"/>
</dbReference>
<dbReference type="Proteomes" id="UP000006388">
    <property type="component" value="Chromosome"/>
</dbReference>
<dbReference type="GO" id="GO:0005737">
    <property type="term" value="C:cytoplasm"/>
    <property type="evidence" value="ECO:0007669"/>
    <property type="project" value="UniProtKB-SubCell"/>
</dbReference>
<dbReference type="GO" id="GO:0004821">
    <property type="term" value="F:histidine-tRNA ligase activity"/>
    <property type="evidence" value="ECO:0007669"/>
    <property type="project" value="TreeGrafter"/>
</dbReference>
<dbReference type="GO" id="GO:0006427">
    <property type="term" value="P:histidyl-tRNA aminoacylation"/>
    <property type="evidence" value="ECO:0007669"/>
    <property type="project" value="TreeGrafter"/>
</dbReference>
<dbReference type="GO" id="GO:0000105">
    <property type="term" value="P:L-histidine biosynthetic process"/>
    <property type="evidence" value="ECO:0007669"/>
    <property type="project" value="UniProtKB-UniRule"/>
</dbReference>
<dbReference type="CDD" id="cd00773">
    <property type="entry name" value="HisRS-like_core"/>
    <property type="match status" value="1"/>
</dbReference>
<dbReference type="Gene3D" id="3.30.930.10">
    <property type="entry name" value="Bira Bifunctional Protein, Domain 2"/>
    <property type="match status" value="1"/>
</dbReference>
<dbReference type="HAMAP" id="MF_00125">
    <property type="entry name" value="HisZ"/>
    <property type="match status" value="1"/>
</dbReference>
<dbReference type="InterPro" id="IPR045864">
    <property type="entry name" value="aa-tRNA-synth_II/BPL/LPL"/>
</dbReference>
<dbReference type="InterPro" id="IPR041715">
    <property type="entry name" value="HisRS-like_core"/>
</dbReference>
<dbReference type="InterPro" id="IPR004516">
    <property type="entry name" value="HisRS/HisZ"/>
</dbReference>
<dbReference type="InterPro" id="IPR004517">
    <property type="entry name" value="HisZ"/>
</dbReference>
<dbReference type="NCBIfam" id="TIGR00443">
    <property type="entry name" value="hisZ_biosyn_reg"/>
    <property type="match status" value="1"/>
</dbReference>
<dbReference type="NCBIfam" id="NF008935">
    <property type="entry name" value="PRK12292.1-1"/>
    <property type="match status" value="1"/>
</dbReference>
<dbReference type="NCBIfam" id="NF009086">
    <property type="entry name" value="PRK12421.1"/>
    <property type="match status" value="1"/>
</dbReference>
<dbReference type="PANTHER" id="PTHR43707:SF1">
    <property type="entry name" value="HISTIDINE--TRNA LIGASE, MITOCHONDRIAL-RELATED"/>
    <property type="match status" value="1"/>
</dbReference>
<dbReference type="PANTHER" id="PTHR43707">
    <property type="entry name" value="HISTIDYL-TRNA SYNTHETASE"/>
    <property type="match status" value="1"/>
</dbReference>
<dbReference type="Pfam" id="PF13393">
    <property type="entry name" value="tRNA-synt_His"/>
    <property type="match status" value="1"/>
</dbReference>
<dbReference type="PIRSF" id="PIRSF001549">
    <property type="entry name" value="His-tRNA_synth"/>
    <property type="match status" value="1"/>
</dbReference>
<dbReference type="SUPFAM" id="SSF55681">
    <property type="entry name" value="Class II aaRS and biotin synthetases"/>
    <property type="match status" value="1"/>
</dbReference>
<gene>
    <name evidence="1" type="primary">hisZ</name>
    <name type="ordered locus">mma_2118</name>
</gene>
<sequence>MPNWLLPENIADVLPSEARKIEELRRVILDNFHLYGYELVMPPMLEYLDSLLAGAGHDMDLRTFKLVDQLSGRTLGLRADMTTQVARIDAHLLNRASVTRLCYSGSVLHTRPNGLHATREPLQIGAEIYGHAGLEADAEIQELALASLALAGFTQVRLDLCHVGVLRAIIENDANAQKDESALYTLLRAKDVPALQEITAAYGEESRRALLALPSLYGDATVLTRARKELPALPGITRALDELAALTSLAGEANVTIDLADLGGYQYESGAMFAIYVPGLPNAVARGGRYDHVGEAFGRARPATGFSMDLRELARLLPVAERKRAIRAPWGREALLRSKIVALRKAGEVVIQSLPGYENDQDEFECDRVLVLEDGNWIIKNLG</sequence>
<protein>
    <recommendedName>
        <fullName evidence="1">ATP phosphoribosyltransferase regulatory subunit</fullName>
    </recommendedName>
</protein>
<organism>
    <name type="scientific">Janthinobacterium sp. (strain Marseille)</name>
    <name type="common">Minibacterium massiliensis</name>
    <dbReference type="NCBI Taxonomy" id="375286"/>
    <lineage>
        <taxon>Bacteria</taxon>
        <taxon>Pseudomonadati</taxon>
        <taxon>Pseudomonadota</taxon>
        <taxon>Betaproteobacteria</taxon>
        <taxon>Burkholderiales</taxon>
        <taxon>Oxalobacteraceae</taxon>
        <taxon>Janthinobacterium</taxon>
    </lineage>
</organism>